<proteinExistence type="evidence at transcript level"/>
<organism>
    <name type="scientific">Mus musculus</name>
    <name type="common">Mouse</name>
    <dbReference type="NCBI Taxonomy" id="10090"/>
    <lineage>
        <taxon>Eukaryota</taxon>
        <taxon>Metazoa</taxon>
        <taxon>Chordata</taxon>
        <taxon>Craniata</taxon>
        <taxon>Vertebrata</taxon>
        <taxon>Euteleostomi</taxon>
        <taxon>Mammalia</taxon>
        <taxon>Eutheria</taxon>
        <taxon>Euarchontoglires</taxon>
        <taxon>Glires</taxon>
        <taxon>Rodentia</taxon>
        <taxon>Myomorpha</taxon>
        <taxon>Muroidea</taxon>
        <taxon>Muridae</taxon>
        <taxon>Murinae</taxon>
        <taxon>Mus</taxon>
        <taxon>Mus</taxon>
    </lineage>
</organism>
<protein>
    <recommendedName>
        <fullName>Solute carrier family 41 member 1</fullName>
    </recommendedName>
</protein>
<keyword id="KW-1003">Cell membrane</keyword>
<keyword id="KW-0406">Ion transport</keyword>
<keyword id="KW-0460">Magnesium</keyword>
<keyword id="KW-0472">Membrane</keyword>
<keyword id="KW-0597">Phosphoprotein</keyword>
<keyword id="KW-1185">Reference proteome</keyword>
<keyword id="KW-0677">Repeat</keyword>
<keyword id="KW-0812">Transmembrane</keyword>
<keyword id="KW-1133">Transmembrane helix</keyword>
<keyword id="KW-0813">Transport</keyword>
<dbReference type="EMBL" id="AK089802">
    <property type="protein sequence ID" value="BAC40965.1"/>
    <property type="molecule type" value="mRNA"/>
</dbReference>
<dbReference type="EMBL" id="BC096596">
    <property type="protein sequence ID" value="AAH96596.1"/>
    <property type="molecule type" value="mRNA"/>
</dbReference>
<dbReference type="EMBL" id="BC116280">
    <property type="protein sequence ID" value="AAI16281.1"/>
    <property type="molecule type" value="mRNA"/>
</dbReference>
<dbReference type="EMBL" id="BC116281">
    <property type="protein sequence ID" value="AAI16282.1"/>
    <property type="molecule type" value="mRNA"/>
</dbReference>
<dbReference type="CCDS" id="CCDS15275.1"/>
<dbReference type="RefSeq" id="NP_776290.1">
    <property type="nucleotide sequence ID" value="NM_173865.3"/>
</dbReference>
<dbReference type="RefSeq" id="XP_036010523.1">
    <property type="nucleotide sequence ID" value="XM_036154630.1"/>
</dbReference>
<dbReference type="RefSeq" id="XP_036010524.1">
    <property type="nucleotide sequence ID" value="XM_036154631.1"/>
</dbReference>
<dbReference type="BioGRID" id="221048">
    <property type="interactions" value="1"/>
</dbReference>
<dbReference type="FunCoup" id="Q8BJA2">
    <property type="interactions" value="176"/>
</dbReference>
<dbReference type="STRING" id="10090.ENSMUSP00000083747"/>
<dbReference type="GlyGen" id="Q8BJA2">
    <property type="glycosylation" value="1 site"/>
</dbReference>
<dbReference type="iPTMnet" id="Q8BJA2"/>
<dbReference type="PhosphoSitePlus" id="Q8BJA2"/>
<dbReference type="SwissPalm" id="Q8BJA2"/>
<dbReference type="PaxDb" id="10090-ENSMUSP00000083747"/>
<dbReference type="PeptideAtlas" id="Q8BJA2"/>
<dbReference type="ProteomicsDB" id="256903"/>
<dbReference type="Antibodypedia" id="2794">
    <property type="antibodies" value="38 antibodies from 14 providers"/>
</dbReference>
<dbReference type="DNASU" id="98396"/>
<dbReference type="Ensembl" id="ENSMUST00000086559.7">
    <property type="protein sequence ID" value="ENSMUSP00000083747.7"/>
    <property type="gene ID" value="ENSMUSG00000013275.10"/>
</dbReference>
<dbReference type="GeneID" id="98396"/>
<dbReference type="KEGG" id="mmu:98396"/>
<dbReference type="UCSC" id="uc007cnu.3">
    <property type="organism name" value="mouse"/>
</dbReference>
<dbReference type="AGR" id="MGI:2444823"/>
<dbReference type="CTD" id="254428"/>
<dbReference type="MGI" id="MGI:2444823">
    <property type="gene designation" value="Slc41a1"/>
</dbReference>
<dbReference type="VEuPathDB" id="HostDB:ENSMUSG00000013275"/>
<dbReference type="eggNOG" id="KOG3788">
    <property type="taxonomic scope" value="Eukaryota"/>
</dbReference>
<dbReference type="GeneTree" id="ENSGT00950000183042"/>
<dbReference type="HOGENOM" id="CLU_018207_3_1_1"/>
<dbReference type="InParanoid" id="Q8BJA2"/>
<dbReference type="OMA" id="WDPDNVT"/>
<dbReference type="OrthoDB" id="5791097at2759"/>
<dbReference type="PhylomeDB" id="Q8BJA2"/>
<dbReference type="TreeFam" id="TF313647"/>
<dbReference type="Reactome" id="R-MMU-425410">
    <property type="pathway name" value="Metal ion SLC transporters"/>
</dbReference>
<dbReference type="BioGRID-ORCS" id="98396">
    <property type="hits" value="3 hits in 77 CRISPR screens"/>
</dbReference>
<dbReference type="ChiTaRS" id="Slc41a1">
    <property type="organism name" value="mouse"/>
</dbReference>
<dbReference type="PRO" id="PR:Q8BJA2"/>
<dbReference type="Proteomes" id="UP000000589">
    <property type="component" value="Chromosome 1"/>
</dbReference>
<dbReference type="RNAct" id="Q8BJA2">
    <property type="molecule type" value="protein"/>
</dbReference>
<dbReference type="Bgee" id="ENSMUSG00000013275">
    <property type="expression patterns" value="Expressed in extra-ocular muscle and 264 other cell types or tissues"/>
</dbReference>
<dbReference type="GO" id="GO:0016323">
    <property type="term" value="C:basolateral plasma membrane"/>
    <property type="evidence" value="ECO:0007669"/>
    <property type="project" value="UniProtKB-SubCell"/>
</dbReference>
<dbReference type="GO" id="GO:0032991">
    <property type="term" value="C:protein-containing complex"/>
    <property type="evidence" value="ECO:0007669"/>
    <property type="project" value="Ensembl"/>
</dbReference>
<dbReference type="GO" id="GO:0022890">
    <property type="term" value="F:inorganic cation transmembrane transporter activity"/>
    <property type="evidence" value="ECO:0000314"/>
    <property type="project" value="ParkinsonsUK-UCL"/>
</dbReference>
<dbReference type="GO" id="GO:0061768">
    <property type="term" value="F:magnesium:sodium antiporter activity"/>
    <property type="evidence" value="ECO:0000250"/>
    <property type="project" value="UniProtKB"/>
</dbReference>
<dbReference type="GO" id="GO:0071286">
    <property type="term" value="P:cellular response to magnesium ion"/>
    <property type="evidence" value="ECO:0000314"/>
    <property type="project" value="ParkinsonsUK-UCL"/>
</dbReference>
<dbReference type="GO" id="GO:0010961">
    <property type="term" value="P:intracellular magnesium ion homeostasis"/>
    <property type="evidence" value="ECO:0007669"/>
    <property type="project" value="Ensembl"/>
</dbReference>
<dbReference type="GO" id="GO:1903830">
    <property type="term" value="P:magnesium ion transmembrane transport"/>
    <property type="evidence" value="ECO:0000314"/>
    <property type="project" value="ParkinsonsUK-UCL"/>
</dbReference>
<dbReference type="GO" id="GO:0030001">
    <property type="term" value="P:metal ion transport"/>
    <property type="evidence" value="ECO:0000314"/>
    <property type="project" value="ParkinsonsUK-UCL"/>
</dbReference>
<dbReference type="FunFam" id="1.10.357.20:FF:000001">
    <property type="entry name" value="Solute carrier family 41 member 2"/>
    <property type="match status" value="1"/>
</dbReference>
<dbReference type="FunFam" id="1.10.357.20:FF:000002">
    <property type="entry name" value="Solute carrier family 41, member 2"/>
    <property type="match status" value="1"/>
</dbReference>
<dbReference type="Gene3D" id="1.10.357.20">
    <property type="entry name" value="SLC41 divalent cation transporters, integral membrane domain"/>
    <property type="match status" value="2"/>
</dbReference>
<dbReference type="InterPro" id="IPR006667">
    <property type="entry name" value="SLC41_membr_dom"/>
</dbReference>
<dbReference type="InterPro" id="IPR036739">
    <property type="entry name" value="SLC41_membr_dom_sf"/>
</dbReference>
<dbReference type="InterPro" id="IPR045349">
    <property type="entry name" value="SLC41A1-3"/>
</dbReference>
<dbReference type="PANTHER" id="PTHR16228">
    <property type="entry name" value="DIVALENT CATION TRANSPORTER SOLUTE CARRIER FAMILY 41"/>
    <property type="match status" value="1"/>
</dbReference>
<dbReference type="PANTHER" id="PTHR16228:SF23">
    <property type="entry name" value="SOLUTE CARRIER FAMILY 41 MEMBER 1"/>
    <property type="match status" value="1"/>
</dbReference>
<dbReference type="Pfam" id="PF01769">
    <property type="entry name" value="MgtE"/>
    <property type="match status" value="2"/>
</dbReference>
<dbReference type="SUPFAM" id="SSF161093">
    <property type="entry name" value="MgtE membrane domain-like"/>
    <property type="match status" value="2"/>
</dbReference>
<comment type="function">
    <text evidence="1 5">Na(+)/Mg(2+) ion exchanger that acts as a predominant Mg(2+) efflux system at the plasma membrane. Transporter activity is driven by the inwardly directed electrochemical gradient for Na(+) ions, thus directly depends on the extracellular Na(+) ion concentration set by Na(+)/K(+) pump. Generates circadian cellular Mg(2+) fluxes that feed back to regulate clock-controlled gene expression and metabolism and facilitate higher energetic demands during the day (By similarity). Has a role in regulating the activity of ATP-dependent enzymes, including those operating in Krebs cycle and the electron transport chain (PubMed:33153064).</text>
</comment>
<comment type="catalytic activity">
    <reaction evidence="1">
        <text>Mg(2+)(in) + 2 Na(+)(out) = Mg(2+)(out) + 2 Na(+)(in)</text>
        <dbReference type="Rhea" id="RHEA:66616"/>
        <dbReference type="ChEBI" id="CHEBI:18420"/>
        <dbReference type="ChEBI" id="CHEBI:29101"/>
    </reaction>
    <physiologicalReaction direction="left-to-right" evidence="1">
        <dbReference type="Rhea" id="RHEA:66617"/>
    </physiologicalReaction>
</comment>
<comment type="subcellular location">
    <subcellularLocation>
        <location evidence="1">Cell membrane</location>
        <topology evidence="2">Multi-pass membrane protein</topology>
    </subcellularLocation>
    <subcellularLocation>
        <location evidence="1">Basolateral cell membrane</location>
        <topology evidence="2">Multi-pass membrane protein</topology>
    </subcellularLocation>
</comment>
<comment type="tissue specificity">
    <text evidence="4">Expressed in heart, brain, kidney, liver and colon.</text>
</comment>
<comment type="induction">
    <text evidence="4">Up-regulated in heart, brain, kidney and down-regulated in liver by low Mg(2+) diet.</text>
</comment>
<comment type="PTM">
    <text evidence="1">Phosphorylated.</text>
</comment>
<comment type="similarity">
    <text evidence="7">Belongs to the SLC41A transporter family.</text>
</comment>
<name>S41A1_MOUSE</name>
<feature type="chain" id="PRO_0000295112" description="Solute carrier family 41 member 1">
    <location>
        <begin position="1"/>
        <end position="512"/>
    </location>
</feature>
<feature type="transmembrane region" description="Helical" evidence="2">
    <location>
        <begin position="101"/>
        <end position="121"/>
    </location>
</feature>
<feature type="transmembrane region" description="Helical" evidence="2">
    <location>
        <begin position="184"/>
        <end position="204"/>
    </location>
</feature>
<feature type="transmembrane region" description="Helical" evidence="2">
    <location>
        <begin position="221"/>
        <end position="241"/>
    </location>
</feature>
<feature type="transmembrane region" description="Helical" evidence="2">
    <location>
        <begin position="256"/>
        <end position="276"/>
    </location>
</feature>
<feature type="transmembrane region" description="Helical" evidence="2">
    <location>
        <begin position="285"/>
        <end position="305"/>
    </location>
</feature>
<feature type="transmembrane region" description="Helical" evidence="2">
    <location>
        <begin position="315"/>
        <end position="335"/>
    </location>
</feature>
<feature type="transmembrane region" description="Helical" evidence="2">
    <location>
        <begin position="345"/>
        <end position="365"/>
    </location>
</feature>
<feature type="transmembrane region" description="Helical" evidence="2">
    <location>
        <begin position="410"/>
        <end position="430"/>
    </location>
</feature>
<feature type="transmembrane region" description="Helical" evidence="2">
    <location>
        <begin position="438"/>
        <end position="458"/>
    </location>
</feature>
<feature type="transmembrane region" description="Helical" evidence="2">
    <location>
        <begin position="483"/>
        <end position="503"/>
    </location>
</feature>
<feature type="region of interest" description="Disordered" evidence="3">
    <location>
        <begin position="1"/>
        <end position="40"/>
    </location>
</feature>
<feature type="region of interest" description="Disordered" evidence="3">
    <location>
        <begin position="60"/>
        <end position="90"/>
    </location>
</feature>
<feature type="compositionally biased region" description="Basic and acidic residues" evidence="3">
    <location>
        <begin position="1"/>
        <end position="11"/>
    </location>
</feature>
<feature type="compositionally biased region" description="Polar residues" evidence="3">
    <location>
        <begin position="13"/>
        <end position="24"/>
    </location>
</feature>
<reference key="1">
    <citation type="journal article" date="2005" name="Science">
        <title>The transcriptional landscape of the mammalian genome.</title>
        <authorList>
            <person name="Carninci P."/>
            <person name="Kasukawa T."/>
            <person name="Katayama S."/>
            <person name="Gough J."/>
            <person name="Frith M.C."/>
            <person name="Maeda N."/>
            <person name="Oyama R."/>
            <person name="Ravasi T."/>
            <person name="Lenhard B."/>
            <person name="Wells C."/>
            <person name="Kodzius R."/>
            <person name="Shimokawa K."/>
            <person name="Bajic V.B."/>
            <person name="Brenner S.E."/>
            <person name="Batalov S."/>
            <person name="Forrest A.R."/>
            <person name="Zavolan M."/>
            <person name="Davis M.J."/>
            <person name="Wilming L.G."/>
            <person name="Aidinis V."/>
            <person name="Allen J.E."/>
            <person name="Ambesi-Impiombato A."/>
            <person name="Apweiler R."/>
            <person name="Aturaliya R.N."/>
            <person name="Bailey T.L."/>
            <person name="Bansal M."/>
            <person name="Baxter L."/>
            <person name="Beisel K.W."/>
            <person name="Bersano T."/>
            <person name="Bono H."/>
            <person name="Chalk A.M."/>
            <person name="Chiu K.P."/>
            <person name="Choudhary V."/>
            <person name="Christoffels A."/>
            <person name="Clutterbuck D.R."/>
            <person name="Crowe M.L."/>
            <person name="Dalla E."/>
            <person name="Dalrymple B.P."/>
            <person name="de Bono B."/>
            <person name="Della Gatta G."/>
            <person name="di Bernardo D."/>
            <person name="Down T."/>
            <person name="Engstrom P."/>
            <person name="Fagiolini M."/>
            <person name="Faulkner G."/>
            <person name="Fletcher C.F."/>
            <person name="Fukushima T."/>
            <person name="Furuno M."/>
            <person name="Futaki S."/>
            <person name="Gariboldi M."/>
            <person name="Georgii-Hemming P."/>
            <person name="Gingeras T.R."/>
            <person name="Gojobori T."/>
            <person name="Green R.E."/>
            <person name="Gustincich S."/>
            <person name="Harbers M."/>
            <person name="Hayashi Y."/>
            <person name="Hensch T.K."/>
            <person name="Hirokawa N."/>
            <person name="Hill D."/>
            <person name="Huminiecki L."/>
            <person name="Iacono M."/>
            <person name="Ikeo K."/>
            <person name="Iwama A."/>
            <person name="Ishikawa T."/>
            <person name="Jakt M."/>
            <person name="Kanapin A."/>
            <person name="Katoh M."/>
            <person name="Kawasawa Y."/>
            <person name="Kelso J."/>
            <person name="Kitamura H."/>
            <person name="Kitano H."/>
            <person name="Kollias G."/>
            <person name="Krishnan S.P."/>
            <person name="Kruger A."/>
            <person name="Kummerfeld S.K."/>
            <person name="Kurochkin I.V."/>
            <person name="Lareau L.F."/>
            <person name="Lazarevic D."/>
            <person name="Lipovich L."/>
            <person name="Liu J."/>
            <person name="Liuni S."/>
            <person name="McWilliam S."/>
            <person name="Madan Babu M."/>
            <person name="Madera M."/>
            <person name="Marchionni L."/>
            <person name="Matsuda H."/>
            <person name="Matsuzawa S."/>
            <person name="Miki H."/>
            <person name="Mignone F."/>
            <person name="Miyake S."/>
            <person name="Morris K."/>
            <person name="Mottagui-Tabar S."/>
            <person name="Mulder N."/>
            <person name="Nakano N."/>
            <person name="Nakauchi H."/>
            <person name="Ng P."/>
            <person name="Nilsson R."/>
            <person name="Nishiguchi S."/>
            <person name="Nishikawa S."/>
            <person name="Nori F."/>
            <person name="Ohara O."/>
            <person name="Okazaki Y."/>
            <person name="Orlando V."/>
            <person name="Pang K.C."/>
            <person name="Pavan W.J."/>
            <person name="Pavesi G."/>
            <person name="Pesole G."/>
            <person name="Petrovsky N."/>
            <person name="Piazza S."/>
            <person name="Reed J."/>
            <person name="Reid J.F."/>
            <person name="Ring B.Z."/>
            <person name="Ringwald M."/>
            <person name="Rost B."/>
            <person name="Ruan Y."/>
            <person name="Salzberg S.L."/>
            <person name="Sandelin A."/>
            <person name="Schneider C."/>
            <person name="Schoenbach C."/>
            <person name="Sekiguchi K."/>
            <person name="Semple C.A."/>
            <person name="Seno S."/>
            <person name="Sessa L."/>
            <person name="Sheng Y."/>
            <person name="Shibata Y."/>
            <person name="Shimada H."/>
            <person name="Shimada K."/>
            <person name="Silva D."/>
            <person name="Sinclair B."/>
            <person name="Sperling S."/>
            <person name="Stupka E."/>
            <person name="Sugiura K."/>
            <person name="Sultana R."/>
            <person name="Takenaka Y."/>
            <person name="Taki K."/>
            <person name="Tammoja K."/>
            <person name="Tan S.L."/>
            <person name="Tang S."/>
            <person name="Taylor M.S."/>
            <person name="Tegner J."/>
            <person name="Teichmann S.A."/>
            <person name="Ueda H.R."/>
            <person name="van Nimwegen E."/>
            <person name="Verardo R."/>
            <person name="Wei C.L."/>
            <person name="Yagi K."/>
            <person name="Yamanishi H."/>
            <person name="Zabarovsky E."/>
            <person name="Zhu S."/>
            <person name="Zimmer A."/>
            <person name="Hide W."/>
            <person name="Bult C."/>
            <person name="Grimmond S.M."/>
            <person name="Teasdale R.D."/>
            <person name="Liu E.T."/>
            <person name="Brusic V."/>
            <person name="Quackenbush J."/>
            <person name="Wahlestedt C."/>
            <person name="Mattick J.S."/>
            <person name="Hume D.A."/>
            <person name="Kai C."/>
            <person name="Sasaki D."/>
            <person name="Tomaru Y."/>
            <person name="Fukuda S."/>
            <person name="Kanamori-Katayama M."/>
            <person name="Suzuki M."/>
            <person name="Aoki J."/>
            <person name="Arakawa T."/>
            <person name="Iida J."/>
            <person name="Imamura K."/>
            <person name="Itoh M."/>
            <person name="Kato T."/>
            <person name="Kawaji H."/>
            <person name="Kawagashira N."/>
            <person name="Kawashima T."/>
            <person name="Kojima M."/>
            <person name="Kondo S."/>
            <person name="Konno H."/>
            <person name="Nakano K."/>
            <person name="Ninomiya N."/>
            <person name="Nishio T."/>
            <person name="Okada M."/>
            <person name="Plessy C."/>
            <person name="Shibata K."/>
            <person name="Shiraki T."/>
            <person name="Suzuki S."/>
            <person name="Tagami M."/>
            <person name="Waki K."/>
            <person name="Watahiki A."/>
            <person name="Okamura-Oho Y."/>
            <person name="Suzuki H."/>
            <person name="Kawai J."/>
            <person name="Hayashizaki Y."/>
        </authorList>
    </citation>
    <scope>NUCLEOTIDE SEQUENCE [LARGE SCALE MRNA]</scope>
    <source>
        <strain>NOD</strain>
        <tissue>Spleen</tissue>
    </source>
</reference>
<reference key="2">
    <citation type="journal article" date="2004" name="Genome Res.">
        <title>The status, quality, and expansion of the NIH full-length cDNA project: the Mammalian Gene Collection (MGC).</title>
        <authorList>
            <consortium name="The MGC Project Team"/>
        </authorList>
    </citation>
    <scope>NUCLEOTIDE SEQUENCE [LARGE SCALE MRNA]</scope>
    <source>
        <strain>FVB/N</strain>
        <tissue>Kidney</tissue>
    </source>
</reference>
<reference key="3">
    <citation type="journal article" date="2005" name="Physiol. Genomics">
        <title>Functional characterization of human SLC41A1, a Mg2+ transporter with similarity to prokaryotic MgtE Mg2+ transporters.</title>
        <authorList>
            <person name="Goytain A."/>
            <person name="Quamme G.A."/>
        </authorList>
    </citation>
    <scope>TISSUE SPECIFICITY</scope>
    <scope>INDUCTION</scope>
</reference>
<reference key="4">
    <citation type="journal article" date="2020" name="Int. J. Mol. Sci.">
        <title>Dietary Mg2+ Intake and the Na+/Mg2+ Exchanger SLC41A1 Influence Components of Mitochondrial Energetics in Murine Cardiomyocytes.</title>
        <authorList>
            <person name="Tatarkova Z."/>
            <person name="de Baaij J.H.F."/>
            <person name="Grendar M."/>
            <person name="Aschenbach J.R."/>
            <person name="Racay P."/>
            <person name="Bos C."/>
            <person name="Sponder G."/>
            <person name="Hoenderop J.G.J."/>
            <person name="Roentgen M."/>
            <person name="Turcanova Koprusakova M."/>
            <person name="Kolisek M."/>
        </authorList>
    </citation>
    <scope>FUNCTION</scope>
</reference>
<accession>Q8BJA2</accession>
<sequence>MSSKPEPKDIHQPNGTGPTPSPCSSDGPGREPLAGTSEFLGPDGVEVVVIESRANAKGIREEDALLENGSQSNESDDVSTDRGPAPPSPLKETSFSIGLQVLFPFLLAGFGTVAAGMVLDIVQHWEVFQKVTEVFILVPALLGLKGNLEMTLASRLSTAANIGQMDTPKELWRMITGNMALIQVQATVVGFLASIAAVVFGWIPDGHFSIPHAFLLCASSVATAFIASLVLGMIMIGVIIGSRKIGINPDNVATPIAASLGDLITLALLSGISWGLYLELKHWRYIYPLVCAFFVALLPVWVVLARRSPATREVLYSGWEPVIIAMAISSVGGLILDKTVSDPNFAGMAVFTPVINGVGGNLVAVQASRISTFLHMNGMPGENSEPTPRRCPSPCTTFFSPDVNSRSARVLFLLVVPGHLVFLYTISCMQGGHTTLTLIFIIFYMTAALLQVLILLYIADWMVHWMWGRGLDPDNFSIPYLTALGDLLGTGLLALSFHVLWLIGDRDTDVGD</sequence>
<evidence type="ECO:0000250" key="1">
    <source>
        <dbReference type="UniProtKB" id="Q8IVJ1"/>
    </source>
</evidence>
<evidence type="ECO:0000255" key="2"/>
<evidence type="ECO:0000256" key="3">
    <source>
        <dbReference type="SAM" id="MobiDB-lite"/>
    </source>
</evidence>
<evidence type="ECO:0000269" key="4">
    <source>
    </source>
</evidence>
<evidence type="ECO:0000269" key="5">
    <source>
    </source>
</evidence>
<evidence type="ECO:0000303" key="6">
    <source>
    </source>
</evidence>
<evidence type="ECO:0000305" key="7"/>
<evidence type="ECO:0000312" key="8">
    <source>
        <dbReference type="MGI" id="MGI:2444823"/>
    </source>
</evidence>
<gene>
    <name evidence="6 8" type="primary">Slc41a1</name>
</gene>